<evidence type="ECO:0000255" key="1">
    <source>
        <dbReference type="HAMAP-Rule" id="MF_00318"/>
    </source>
</evidence>
<gene>
    <name evidence="1" type="primary">eno</name>
    <name type="ordered locus">YPDSF_2983</name>
</gene>
<protein>
    <recommendedName>
        <fullName evidence="1">Enolase</fullName>
        <ecNumber evidence="1">4.2.1.11</ecNumber>
    </recommendedName>
    <alternativeName>
        <fullName evidence="1">2-phospho-D-glycerate hydro-lyase</fullName>
    </alternativeName>
    <alternativeName>
        <fullName evidence="1">2-phosphoglycerate dehydratase</fullName>
    </alternativeName>
</protein>
<comment type="function">
    <text evidence="1">Catalyzes the reversible conversion of 2-phosphoglycerate (2-PG) into phosphoenolpyruvate (PEP). It is essential for the degradation of carbohydrates via glycolysis.</text>
</comment>
<comment type="catalytic activity">
    <reaction evidence="1">
        <text>(2R)-2-phosphoglycerate = phosphoenolpyruvate + H2O</text>
        <dbReference type="Rhea" id="RHEA:10164"/>
        <dbReference type="ChEBI" id="CHEBI:15377"/>
        <dbReference type="ChEBI" id="CHEBI:58289"/>
        <dbReference type="ChEBI" id="CHEBI:58702"/>
        <dbReference type="EC" id="4.2.1.11"/>
    </reaction>
</comment>
<comment type="cofactor">
    <cofactor evidence="1">
        <name>Mg(2+)</name>
        <dbReference type="ChEBI" id="CHEBI:18420"/>
    </cofactor>
    <text evidence="1">Binds a second Mg(2+) ion via substrate during catalysis.</text>
</comment>
<comment type="pathway">
    <text evidence="1">Carbohydrate degradation; glycolysis; pyruvate from D-glyceraldehyde 3-phosphate: step 4/5.</text>
</comment>
<comment type="subunit">
    <text evidence="1">Component of the RNA degradosome, a multiprotein complex involved in RNA processing and mRNA degradation.</text>
</comment>
<comment type="subcellular location">
    <subcellularLocation>
        <location evidence="1">Cytoplasm</location>
    </subcellularLocation>
    <subcellularLocation>
        <location evidence="1">Secreted</location>
    </subcellularLocation>
    <subcellularLocation>
        <location evidence="1">Cell surface</location>
    </subcellularLocation>
    <text evidence="1">Fractions of enolase are present in both the cytoplasm and on the cell surface.</text>
</comment>
<comment type="similarity">
    <text evidence="1">Belongs to the enolase family.</text>
</comment>
<accession>A4TPY1</accession>
<name>ENO_YERPP</name>
<proteinExistence type="inferred from homology"/>
<reference key="1">
    <citation type="submission" date="2007-02" db="EMBL/GenBank/DDBJ databases">
        <title>Complete sequence of chromosome of Yersinia pestis Pestoides F.</title>
        <authorList>
            <consortium name="US DOE Joint Genome Institute"/>
            <person name="Copeland A."/>
            <person name="Lucas S."/>
            <person name="Lapidus A."/>
            <person name="Barry K."/>
            <person name="Detter J.C."/>
            <person name="Glavina del Rio T."/>
            <person name="Hammon N."/>
            <person name="Israni S."/>
            <person name="Dalin E."/>
            <person name="Tice H."/>
            <person name="Pitluck S."/>
            <person name="Di Bartolo G."/>
            <person name="Chain P."/>
            <person name="Malfatti S."/>
            <person name="Shin M."/>
            <person name="Vergez L."/>
            <person name="Schmutz J."/>
            <person name="Larimer F."/>
            <person name="Land M."/>
            <person name="Hauser L."/>
            <person name="Worsham P."/>
            <person name="Chu M."/>
            <person name="Bearden S."/>
            <person name="Garcia E."/>
            <person name="Richardson P."/>
        </authorList>
    </citation>
    <scope>NUCLEOTIDE SEQUENCE [LARGE SCALE GENOMIC DNA]</scope>
    <source>
        <strain>Pestoides F</strain>
    </source>
</reference>
<dbReference type="EC" id="4.2.1.11" evidence="1"/>
<dbReference type="EMBL" id="CP000668">
    <property type="protein sequence ID" value="ABP41343.1"/>
    <property type="molecule type" value="Genomic_DNA"/>
</dbReference>
<dbReference type="RefSeq" id="WP_002209377.1">
    <property type="nucleotide sequence ID" value="NZ_CP009715.1"/>
</dbReference>
<dbReference type="SMR" id="A4TPY1"/>
<dbReference type="GeneID" id="96664252"/>
<dbReference type="KEGG" id="ypp:YPDSF_2983"/>
<dbReference type="PATRIC" id="fig|386656.14.peg.1381"/>
<dbReference type="UniPathway" id="UPA00109">
    <property type="reaction ID" value="UER00187"/>
</dbReference>
<dbReference type="GO" id="GO:0009986">
    <property type="term" value="C:cell surface"/>
    <property type="evidence" value="ECO:0007669"/>
    <property type="project" value="UniProtKB-SubCell"/>
</dbReference>
<dbReference type="GO" id="GO:0005576">
    <property type="term" value="C:extracellular region"/>
    <property type="evidence" value="ECO:0007669"/>
    <property type="project" value="UniProtKB-SubCell"/>
</dbReference>
<dbReference type="GO" id="GO:0000015">
    <property type="term" value="C:phosphopyruvate hydratase complex"/>
    <property type="evidence" value="ECO:0007669"/>
    <property type="project" value="InterPro"/>
</dbReference>
<dbReference type="GO" id="GO:0000287">
    <property type="term" value="F:magnesium ion binding"/>
    <property type="evidence" value="ECO:0007669"/>
    <property type="project" value="UniProtKB-UniRule"/>
</dbReference>
<dbReference type="GO" id="GO:0004634">
    <property type="term" value="F:phosphopyruvate hydratase activity"/>
    <property type="evidence" value="ECO:0007669"/>
    <property type="project" value="UniProtKB-UniRule"/>
</dbReference>
<dbReference type="GO" id="GO:0006096">
    <property type="term" value="P:glycolytic process"/>
    <property type="evidence" value="ECO:0007669"/>
    <property type="project" value="UniProtKB-UniRule"/>
</dbReference>
<dbReference type="CDD" id="cd03313">
    <property type="entry name" value="enolase"/>
    <property type="match status" value="1"/>
</dbReference>
<dbReference type="FunFam" id="3.20.20.120:FF:000001">
    <property type="entry name" value="Enolase"/>
    <property type="match status" value="1"/>
</dbReference>
<dbReference type="FunFam" id="3.30.390.10:FF:000001">
    <property type="entry name" value="Enolase"/>
    <property type="match status" value="1"/>
</dbReference>
<dbReference type="Gene3D" id="3.20.20.120">
    <property type="entry name" value="Enolase-like C-terminal domain"/>
    <property type="match status" value="1"/>
</dbReference>
<dbReference type="Gene3D" id="3.30.390.10">
    <property type="entry name" value="Enolase-like, N-terminal domain"/>
    <property type="match status" value="1"/>
</dbReference>
<dbReference type="HAMAP" id="MF_00318">
    <property type="entry name" value="Enolase"/>
    <property type="match status" value="1"/>
</dbReference>
<dbReference type="InterPro" id="IPR000941">
    <property type="entry name" value="Enolase"/>
</dbReference>
<dbReference type="InterPro" id="IPR036849">
    <property type="entry name" value="Enolase-like_C_sf"/>
</dbReference>
<dbReference type="InterPro" id="IPR029017">
    <property type="entry name" value="Enolase-like_N"/>
</dbReference>
<dbReference type="InterPro" id="IPR020810">
    <property type="entry name" value="Enolase_C"/>
</dbReference>
<dbReference type="InterPro" id="IPR020809">
    <property type="entry name" value="Enolase_CS"/>
</dbReference>
<dbReference type="InterPro" id="IPR020811">
    <property type="entry name" value="Enolase_N"/>
</dbReference>
<dbReference type="NCBIfam" id="TIGR01060">
    <property type="entry name" value="eno"/>
    <property type="match status" value="1"/>
</dbReference>
<dbReference type="PANTHER" id="PTHR11902">
    <property type="entry name" value="ENOLASE"/>
    <property type="match status" value="1"/>
</dbReference>
<dbReference type="PANTHER" id="PTHR11902:SF1">
    <property type="entry name" value="ENOLASE"/>
    <property type="match status" value="1"/>
</dbReference>
<dbReference type="Pfam" id="PF00113">
    <property type="entry name" value="Enolase_C"/>
    <property type="match status" value="1"/>
</dbReference>
<dbReference type="Pfam" id="PF03952">
    <property type="entry name" value="Enolase_N"/>
    <property type="match status" value="1"/>
</dbReference>
<dbReference type="PIRSF" id="PIRSF001400">
    <property type="entry name" value="Enolase"/>
    <property type="match status" value="1"/>
</dbReference>
<dbReference type="PRINTS" id="PR00148">
    <property type="entry name" value="ENOLASE"/>
</dbReference>
<dbReference type="SFLD" id="SFLDF00002">
    <property type="entry name" value="enolase"/>
    <property type="match status" value="1"/>
</dbReference>
<dbReference type="SFLD" id="SFLDG00178">
    <property type="entry name" value="enolase"/>
    <property type="match status" value="1"/>
</dbReference>
<dbReference type="SMART" id="SM01192">
    <property type="entry name" value="Enolase_C"/>
    <property type="match status" value="1"/>
</dbReference>
<dbReference type="SMART" id="SM01193">
    <property type="entry name" value="Enolase_N"/>
    <property type="match status" value="1"/>
</dbReference>
<dbReference type="SUPFAM" id="SSF51604">
    <property type="entry name" value="Enolase C-terminal domain-like"/>
    <property type="match status" value="1"/>
</dbReference>
<dbReference type="SUPFAM" id="SSF54826">
    <property type="entry name" value="Enolase N-terminal domain-like"/>
    <property type="match status" value="1"/>
</dbReference>
<dbReference type="PROSITE" id="PS00164">
    <property type="entry name" value="ENOLASE"/>
    <property type="match status" value="1"/>
</dbReference>
<sequence length="431" mass="45469">MSKIVKVIGREIIDSRGNPTVEAEVHLEGGFVGLAAAPSGASTGSREALELRDGDKSRFLGKGVLKAVAAVNGPIAQAVIGKDAKDQANIDKIMIDLDGTENKSQFGANAILAVSLAAAKAAAASKGMPLYEHIAELNGTPGKFSMPLPMMNIINGGEHADNNVDIQEFMIQPVGAKTLKEAVRIGSEVFHHLAKVLKAKGLNTAVGDEGGYAPNLGSNAEALAVIAEAVKAAGYELGKDITLAMDCAASEFYKDGKYVLAGEGNKAFTSEEFTHFLEDLTKQYPIVSIEDGLDESDWAGFKYQTEVLGDKIQLVGDDLFVTNTKILKEGIEKGVANSILIKFNQIGSLTETLAAIKMAKDAGYTAVISHRSGETEDATIADLAVGTAAGQIKTGSMSRSDRVAKYNQLIRIEEALGDRAPFNGLKEVKGQ</sequence>
<keyword id="KW-0963">Cytoplasm</keyword>
<keyword id="KW-0324">Glycolysis</keyword>
<keyword id="KW-0456">Lyase</keyword>
<keyword id="KW-0460">Magnesium</keyword>
<keyword id="KW-0479">Metal-binding</keyword>
<keyword id="KW-0964">Secreted</keyword>
<feature type="chain" id="PRO_1000019261" description="Enolase">
    <location>
        <begin position="1"/>
        <end position="431"/>
    </location>
</feature>
<feature type="active site" description="Proton donor" evidence="1">
    <location>
        <position position="209"/>
    </location>
</feature>
<feature type="active site" description="Proton acceptor" evidence="1">
    <location>
        <position position="342"/>
    </location>
</feature>
<feature type="binding site" evidence="1">
    <location>
        <position position="167"/>
    </location>
    <ligand>
        <name>(2R)-2-phosphoglycerate</name>
        <dbReference type="ChEBI" id="CHEBI:58289"/>
    </ligand>
</feature>
<feature type="binding site" evidence="1">
    <location>
        <position position="246"/>
    </location>
    <ligand>
        <name>Mg(2+)</name>
        <dbReference type="ChEBI" id="CHEBI:18420"/>
    </ligand>
</feature>
<feature type="binding site" evidence="1">
    <location>
        <position position="290"/>
    </location>
    <ligand>
        <name>Mg(2+)</name>
        <dbReference type="ChEBI" id="CHEBI:18420"/>
    </ligand>
</feature>
<feature type="binding site" evidence="1">
    <location>
        <position position="317"/>
    </location>
    <ligand>
        <name>Mg(2+)</name>
        <dbReference type="ChEBI" id="CHEBI:18420"/>
    </ligand>
</feature>
<feature type="binding site" evidence="1">
    <location>
        <position position="342"/>
    </location>
    <ligand>
        <name>(2R)-2-phosphoglycerate</name>
        <dbReference type="ChEBI" id="CHEBI:58289"/>
    </ligand>
</feature>
<feature type="binding site" evidence="1">
    <location>
        <position position="371"/>
    </location>
    <ligand>
        <name>(2R)-2-phosphoglycerate</name>
        <dbReference type="ChEBI" id="CHEBI:58289"/>
    </ligand>
</feature>
<feature type="binding site" evidence="1">
    <location>
        <position position="372"/>
    </location>
    <ligand>
        <name>(2R)-2-phosphoglycerate</name>
        <dbReference type="ChEBI" id="CHEBI:58289"/>
    </ligand>
</feature>
<feature type="binding site" evidence="1">
    <location>
        <position position="393"/>
    </location>
    <ligand>
        <name>(2R)-2-phosphoglycerate</name>
        <dbReference type="ChEBI" id="CHEBI:58289"/>
    </ligand>
</feature>
<organism>
    <name type="scientific">Yersinia pestis (strain Pestoides F)</name>
    <dbReference type="NCBI Taxonomy" id="386656"/>
    <lineage>
        <taxon>Bacteria</taxon>
        <taxon>Pseudomonadati</taxon>
        <taxon>Pseudomonadota</taxon>
        <taxon>Gammaproteobacteria</taxon>
        <taxon>Enterobacterales</taxon>
        <taxon>Yersiniaceae</taxon>
        <taxon>Yersinia</taxon>
    </lineage>
</organism>